<proteinExistence type="inferred from homology"/>
<organism>
    <name type="scientific">Campylobacter jejuni subsp. jejuni serotype O:6 (strain 81116 / NCTC 11828)</name>
    <dbReference type="NCBI Taxonomy" id="407148"/>
    <lineage>
        <taxon>Bacteria</taxon>
        <taxon>Pseudomonadati</taxon>
        <taxon>Campylobacterota</taxon>
        <taxon>Epsilonproteobacteria</taxon>
        <taxon>Campylobacterales</taxon>
        <taxon>Campylobacteraceae</taxon>
        <taxon>Campylobacter</taxon>
    </lineage>
</organism>
<reference key="1">
    <citation type="journal article" date="2007" name="J. Bacteriol.">
        <title>The complete genome sequence of Campylobacter jejuni strain 81116 (NCTC11828).</title>
        <authorList>
            <person name="Pearson B.M."/>
            <person name="Gaskin D.J.H."/>
            <person name="Segers R.P.A.M."/>
            <person name="Wells J.M."/>
            <person name="Nuijten P.J.M."/>
            <person name="van Vliet A.H.M."/>
        </authorList>
    </citation>
    <scope>NUCLEOTIDE SEQUENCE [LARGE SCALE GENOMIC DNA]</scope>
    <source>
        <strain>81116 / NCTC 11828</strain>
    </source>
</reference>
<accession>A8FLN6</accession>
<feature type="chain" id="PRO_1000071592" description="tRNA pseudouridine synthase A">
    <location>
        <begin position="1"/>
        <end position="240"/>
    </location>
</feature>
<feature type="active site" description="Nucleophile" evidence="1">
    <location>
        <position position="50"/>
    </location>
</feature>
<feature type="binding site" evidence="1">
    <location>
        <position position="109"/>
    </location>
    <ligand>
        <name>substrate</name>
    </ligand>
</feature>
<name>TRUA_CAMJ8</name>
<evidence type="ECO:0000255" key="1">
    <source>
        <dbReference type="HAMAP-Rule" id="MF_00171"/>
    </source>
</evidence>
<dbReference type="EC" id="5.4.99.12" evidence="1"/>
<dbReference type="EMBL" id="CP000814">
    <property type="protein sequence ID" value="ABV52373.1"/>
    <property type="molecule type" value="Genomic_DNA"/>
</dbReference>
<dbReference type="SMR" id="A8FLN6"/>
<dbReference type="KEGG" id="cju:C8J_0774"/>
<dbReference type="HOGENOM" id="CLU_014673_0_1_7"/>
<dbReference type="GO" id="GO:0003723">
    <property type="term" value="F:RNA binding"/>
    <property type="evidence" value="ECO:0007669"/>
    <property type="project" value="InterPro"/>
</dbReference>
<dbReference type="GO" id="GO:0160147">
    <property type="term" value="F:tRNA pseudouridine(38-40) synthase activity"/>
    <property type="evidence" value="ECO:0007669"/>
    <property type="project" value="UniProtKB-EC"/>
</dbReference>
<dbReference type="GO" id="GO:0031119">
    <property type="term" value="P:tRNA pseudouridine synthesis"/>
    <property type="evidence" value="ECO:0007669"/>
    <property type="project" value="UniProtKB-UniRule"/>
</dbReference>
<dbReference type="CDD" id="cd02570">
    <property type="entry name" value="PseudoU_synth_EcTruA"/>
    <property type="match status" value="1"/>
</dbReference>
<dbReference type="Gene3D" id="3.30.70.660">
    <property type="entry name" value="Pseudouridine synthase I, catalytic domain, C-terminal subdomain"/>
    <property type="match status" value="1"/>
</dbReference>
<dbReference type="Gene3D" id="3.30.70.580">
    <property type="entry name" value="Pseudouridine synthase I, catalytic domain, N-terminal subdomain"/>
    <property type="match status" value="1"/>
</dbReference>
<dbReference type="HAMAP" id="MF_00171">
    <property type="entry name" value="TruA"/>
    <property type="match status" value="1"/>
</dbReference>
<dbReference type="InterPro" id="IPR020103">
    <property type="entry name" value="PsdUridine_synth_cat_dom_sf"/>
</dbReference>
<dbReference type="InterPro" id="IPR001406">
    <property type="entry name" value="PsdUridine_synth_TruA"/>
</dbReference>
<dbReference type="InterPro" id="IPR020097">
    <property type="entry name" value="PsdUridine_synth_TruA_a/b_dom"/>
</dbReference>
<dbReference type="InterPro" id="IPR020095">
    <property type="entry name" value="PsdUridine_synth_TruA_C"/>
</dbReference>
<dbReference type="InterPro" id="IPR020094">
    <property type="entry name" value="TruA/RsuA/RluB/E/F_N"/>
</dbReference>
<dbReference type="NCBIfam" id="TIGR00071">
    <property type="entry name" value="hisT_truA"/>
    <property type="match status" value="1"/>
</dbReference>
<dbReference type="PANTHER" id="PTHR11142">
    <property type="entry name" value="PSEUDOURIDYLATE SYNTHASE"/>
    <property type="match status" value="1"/>
</dbReference>
<dbReference type="PANTHER" id="PTHR11142:SF0">
    <property type="entry name" value="TRNA PSEUDOURIDINE SYNTHASE-LIKE 1"/>
    <property type="match status" value="1"/>
</dbReference>
<dbReference type="Pfam" id="PF01416">
    <property type="entry name" value="PseudoU_synth_1"/>
    <property type="match status" value="2"/>
</dbReference>
<dbReference type="PIRSF" id="PIRSF001430">
    <property type="entry name" value="tRNA_psdUrid_synth"/>
    <property type="match status" value="1"/>
</dbReference>
<dbReference type="SUPFAM" id="SSF55120">
    <property type="entry name" value="Pseudouridine synthase"/>
    <property type="match status" value="1"/>
</dbReference>
<protein>
    <recommendedName>
        <fullName evidence="1">tRNA pseudouridine synthase A</fullName>
        <ecNumber evidence="1">5.4.99.12</ecNumber>
    </recommendedName>
    <alternativeName>
        <fullName evidence="1">tRNA pseudouridine(38-40) synthase</fullName>
    </alternativeName>
    <alternativeName>
        <fullName evidence="1">tRNA pseudouridylate synthase I</fullName>
    </alternativeName>
    <alternativeName>
        <fullName evidence="1">tRNA-uridine isomerase I</fullName>
    </alternativeName>
</protein>
<sequence length="240" mass="27456">MKIKIIFSYDGSAFLGSATQPHKKGVQDALSGALSHLGIFSPLLMASRTDKGVHASYAVASVECGDYFTNLEYLQKQLNKFSHPFIHIKKIEKVKDDFEVRFDVKSREYRYIFSHASYSPFMASYVHFYPKFDLGKANELLGFFVGKKDLKFFCKSGGDNKTTLREIFIARAYAYKDFSIFHFKANGFLRGQIRLSVASVLKVLEGKMSEKELKEQIEAKKQYNHFLAPPNGLYLSRICY</sequence>
<gene>
    <name evidence="1" type="primary">truA</name>
    <name type="ordered locus">C8J_0774</name>
</gene>
<comment type="function">
    <text evidence="1">Formation of pseudouridine at positions 38, 39 and 40 in the anticodon stem and loop of transfer RNAs.</text>
</comment>
<comment type="catalytic activity">
    <reaction evidence="1">
        <text>uridine(38/39/40) in tRNA = pseudouridine(38/39/40) in tRNA</text>
        <dbReference type="Rhea" id="RHEA:22376"/>
        <dbReference type="Rhea" id="RHEA-COMP:10085"/>
        <dbReference type="Rhea" id="RHEA-COMP:10087"/>
        <dbReference type="ChEBI" id="CHEBI:65314"/>
        <dbReference type="ChEBI" id="CHEBI:65315"/>
        <dbReference type="EC" id="5.4.99.12"/>
    </reaction>
</comment>
<comment type="subunit">
    <text evidence="1">Homodimer.</text>
</comment>
<comment type="similarity">
    <text evidence="1">Belongs to the tRNA pseudouridine synthase TruA family.</text>
</comment>
<keyword id="KW-0413">Isomerase</keyword>
<keyword id="KW-0819">tRNA processing</keyword>